<evidence type="ECO:0000255" key="1">
    <source>
        <dbReference type="HAMAP-Rule" id="MF_00368"/>
    </source>
</evidence>
<evidence type="ECO:0000305" key="2"/>
<name>RL7_VIBVU</name>
<reference key="1">
    <citation type="submission" date="2002-12" db="EMBL/GenBank/DDBJ databases">
        <title>Complete genome sequence of Vibrio vulnificus CMCP6.</title>
        <authorList>
            <person name="Rhee J.H."/>
            <person name="Kim S.Y."/>
            <person name="Chung S.S."/>
            <person name="Kim J.J."/>
            <person name="Moon Y.H."/>
            <person name="Jeong H."/>
            <person name="Choy H.E."/>
        </authorList>
    </citation>
    <scope>NUCLEOTIDE SEQUENCE [LARGE SCALE GENOMIC DNA]</scope>
    <source>
        <strain>CMCP6</strain>
    </source>
</reference>
<accession>Q8DD21</accession>
<keyword id="KW-0687">Ribonucleoprotein</keyword>
<keyword id="KW-0689">Ribosomal protein</keyword>
<comment type="function">
    <text evidence="1">Forms part of the ribosomal stalk which helps the ribosome interact with GTP-bound translation factors. Is thus essential for accurate translation.</text>
</comment>
<comment type="subunit">
    <text evidence="1">Homodimer. Part of the ribosomal stalk of the 50S ribosomal subunit. Forms a multimeric L10(L12)X complex, where L10 forms an elongated spine to which 2 to 4 L12 dimers bind in a sequential fashion. Binds GTP-bound translation factors.</text>
</comment>
<comment type="similarity">
    <text evidence="1">Belongs to the bacterial ribosomal protein bL12 family.</text>
</comment>
<dbReference type="EMBL" id="AE016795">
    <property type="protein sequence ID" value="AAO09670.1"/>
    <property type="molecule type" value="Genomic_DNA"/>
</dbReference>
<dbReference type="RefSeq" id="WP_011079200.1">
    <property type="nucleotide sequence ID" value="NC_004459.3"/>
</dbReference>
<dbReference type="SMR" id="Q8DD21"/>
<dbReference type="GeneID" id="93895477"/>
<dbReference type="KEGG" id="vvu:VV1_1210"/>
<dbReference type="HOGENOM" id="CLU_086499_3_2_6"/>
<dbReference type="Proteomes" id="UP000002275">
    <property type="component" value="Chromosome 1"/>
</dbReference>
<dbReference type="GO" id="GO:0022625">
    <property type="term" value="C:cytosolic large ribosomal subunit"/>
    <property type="evidence" value="ECO:0007669"/>
    <property type="project" value="TreeGrafter"/>
</dbReference>
<dbReference type="GO" id="GO:0003729">
    <property type="term" value="F:mRNA binding"/>
    <property type="evidence" value="ECO:0007669"/>
    <property type="project" value="TreeGrafter"/>
</dbReference>
<dbReference type="GO" id="GO:0003735">
    <property type="term" value="F:structural constituent of ribosome"/>
    <property type="evidence" value="ECO:0007669"/>
    <property type="project" value="InterPro"/>
</dbReference>
<dbReference type="GO" id="GO:0006412">
    <property type="term" value="P:translation"/>
    <property type="evidence" value="ECO:0007669"/>
    <property type="project" value="UniProtKB-UniRule"/>
</dbReference>
<dbReference type="CDD" id="cd00387">
    <property type="entry name" value="Ribosomal_L7_L12"/>
    <property type="match status" value="1"/>
</dbReference>
<dbReference type="FunFam" id="3.30.1390.10:FF:000001">
    <property type="entry name" value="50S ribosomal protein L7/L12"/>
    <property type="match status" value="1"/>
</dbReference>
<dbReference type="Gene3D" id="3.30.1390.10">
    <property type="match status" value="1"/>
</dbReference>
<dbReference type="Gene3D" id="1.20.5.710">
    <property type="entry name" value="Single helix bin"/>
    <property type="match status" value="1"/>
</dbReference>
<dbReference type="HAMAP" id="MF_00368">
    <property type="entry name" value="Ribosomal_bL12"/>
    <property type="match status" value="1"/>
</dbReference>
<dbReference type="InterPro" id="IPR000206">
    <property type="entry name" value="Ribosomal_bL12"/>
</dbReference>
<dbReference type="InterPro" id="IPR013823">
    <property type="entry name" value="Ribosomal_bL12_C"/>
</dbReference>
<dbReference type="InterPro" id="IPR014719">
    <property type="entry name" value="Ribosomal_bL12_C/ClpS-like"/>
</dbReference>
<dbReference type="InterPro" id="IPR008932">
    <property type="entry name" value="Ribosomal_bL12_oligo"/>
</dbReference>
<dbReference type="InterPro" id="IPR036235">
    <property type="entry name" value="Ribosomal_bL12_oligo_N_sf"/>
</dbReference>
<dbReference type="NCBIfam" id="TIGR00855">
    <property type="entry name" value="L12"/>
    <property type="match status" value="1"/>
</dbReference>
<dbReference type="PANTHER" id="PTHR45987">
    <property type="entry name" value="39S RIBOSOMAL PROTEIN L12"/>
    <property type="match status" value="1"/>
</dbReference>
<dbReference type="PANTHER" id="PTHR45987:SF4">
    <property type="entry name" value="LARGE RIBOSOMAL SUBUNIT PROTEIN BL12M"/>
    <property type="match status" value="1"/>
</dbReference>
<dbReference type="Pfam" id="PF00542">
    <property type="entry name" value="Ribosomal_L12"/>
    <property type="match status" value="1"/>
</dbReference>
<dbReference type="Pfam" id="PF16320">
    <property type="entry name" value="Ribosomal_L12_N"/>
    <property type="match status" value="1"/>
</dbReference>
<dbReference type="SUPFAM" id="SSF54736">
    <property type="entry name" value="ClpS-like"/>
    <property type="match status" value="1"/>
</dbReference>
<dbReference type="SUPFAM" id="SSF48300">
    <property type="entry name" value="Ribosomal protein L7/12, oligomerisation (N-terminal) domain"/>
    <property type="match status" value="1"/>
</dbReference>
<gene>
    <name evidence="1" type="primary">rplL</name>
    <name type="ordered locus">VV1_1210</name>
</gene>
<protein>
    <recommendedName>
        <fullName evidence="1">Large ribosomal subunit protein bL12</fullName>
    </recommendedName>
    <alternativeName>
        <fullName evidence="2">50S ribosomal protein L7/L12</fullName>
    </alternativeName>
</protein>
<proteinExistence type="inferred from homology"/>
<sequence length="122" mass="12235">MSITNEQILDAIAEMSVTQVVELISAMEEKFGVTAAAAVVAGGAAAGAAVEEQTEFNVILASAGANKVAVIKAVRGATGLGLKEAKALVDGAPAALKEGVEKAEAEALKKELEEAGATVEIK</sequence>
<feature type="chain" id="PRO_0000157604" description="Large ribosomal subunit protein bL12">
    <location>
        <begin position="1"/>
        <end position="122"/>
    </location>
</feature>
<organism>
    <name type="scientific">Vibrio vulnificus (strain CMCP6)</name>
    <dbReference type="NCBI Taxonomy" id="216895"/>
    <lineage>
        <taxon>Bacteria</taxon>
        <taxon>Pseudomonadati</taxon>
        <taxon>Pseudomonadota</taxon>
        <taxon>Gammaproteobacteria</taxon>
        <taxon>Vibrionales</taxon>
        <taxon>Vibrionaceae</taxon>
        <taxon>Vibrio</taxon>
    </lineage>
</organism>